<name>U496L_ARATH</name>
<sequence>MPHCFTFKPASPEGSLGDDHLPHPSPEGSVASTFNLSHELAHAFQTPSYHDIRSRLLVIDPTQENLELFLSQELRPNNESVQEALSLRHAKQTTLTNLVSTYFQHSEDATRFCLNLYQNVHSARCHLYTPLLDLFNIFPRDSHSAIDESFCNLAFDVFLKLDTFENPFASPESHSFQDTQLCFYQLADKLDTRIRKSKSRVRLLHHATAGSALCLVTAVVVVAASAAFIAYHALPTILVVAGPLCTPYLPHSFKKKELSNIFQLNVAAKGTFALNKDLDTIDRLVSRLHTGVKNDKLLIRLGLERGRDVYTIPEFVKQLRKSHVNHTHQLEVLVDHICRWFTNVNKSRSLLLKEILRPQT</sequence>
<comment type="subcellular location">
    <subcellularLocation>
        <location evidence="3">Membrane</location>
        <topology evidence="3">Multi-pass membrane protein</topology>
    </subcellularLocation>
</comment>
<comment type="similarity">
    <text evidence="3">Belongs to the UPF0496 family.</text>
</comment>
<comment type="sequence caution" evidence="3">
    <conflict type="erroneous termination">
        <sequence resource="EMBL-CDS" id="ABK28563"/>
    </conflict>
    <text>Extended C-terminus.</text>
</comment>
<accession>Q9LJK4</accession>
<accession>A0MEX0</accession>
<dbReference type="EMBL" id="AP000419">
    <property type="protein sequence ID" value="BAB02966.1"/>
    <property type="molecule type" value="Genomic_DNA"/>
</dbReference>
<dbReference type="EMBL" id="CP002686">
    <property type="protein sequence ID" value="AEE76213.1"/>
    <property type="molecule type" value="Genomic_DNA"/>
</dbReference>
<dbReference type="EMBL" id="DQ446674">
    <property type="protein sequence ID" value="ABE65948.1"/>
    <property type="molecule type" value="mRNA"/>
</dbReference>
<dbReference type="EMBL" id="DQ653093">
    <property type="protein sequence ID" value="ABK28563.1"/>
    <property type="status" value="ALT_SEQ"/>
    <property type="molecule type" value="mRNA"/>
</dbReference>
<dbReference type="RefSeq" id="NP_188556.2">
    <property type="nucleotide sequence ID" value="NM_112812.4"/>
</dbReference>
<dbReference type="SMR" id="Q9LJK4"/>
<dbReference type="FunCoup" id="Q9LJK4">
    <property type="interactions" value="136"/>
</dbReference>
<dbReference type="STRING" id="3702.Q9LJK4"/>
<dbReference type="PaxDb" id="3702-AT3G19250.1"/>
<dbReference type="EnsemblPlants" id="AT3G19250.1">
    <property type="protein sequence ID" value="AT3G19250.1"/>
    <property type="gene ID" value="AT3G19250"/>
</dbReference>
<dbReference type="GeneID" id="821459"/>
<dbReference type="Gramene" id="AT3G19250.1">
    <property type="protein sequence ID" value="AT3G19250.1"/>
    <property type="gene ID" value="AT3G19250"/>
</dbReference>
<dbReference type="KEGG" id="ath:AT3G19250"/>
<dbReference type="Araport" id="AT3G19250"/>
<dbReference type="TAIR" id="AT3G19250"/>
<dbReference type="eggNOG" id="ENOG502QUJ9">
    <property type="taxonomic scope" value="Eukaryota"/>
</dbReference>
<dbReference type="HOGENOM" id="CLU_036033_2_0_1"/>
<dbReference type="InParanoid" id="Q9LJK4"/>
<dbReference type="OMA" id="VLEDHIC"/>
<dbReference type="PhylomeDB" id="Q9LJK4"/>
<dbReference type="PRO" id="PR:Q9LJK4"/>
<dbReference type="Proteomes" id="UP000006548">
    <property type="component" value="Chromosome 3"/>
</dbReference>
<dbReference type="ExpressionAtlas" id="Q9LJK4">
    <property type="expression patterns" value="baseline and differential"/>
</dbReference>
<dbReference type="GO" id="GO:0016020">
    <property type="term" value="C:membrane"/>
    <property type="evidence" value="ECO:0007669"/>
    <property type="project" value="UniProtKB-SubCell"/>
</dbReference>
<dbReference type="InterPro" id="IPR007749">
    <property type="entry name" value="DUF677"/>
</dbReference>
<dbReference type="PANTHER" id="PTHR31113:SF5">
    <property type="entry name" value="OS04G0405700 PROTEIN"/>
    <property type="match status" value="1"/>
</dbReference>
<dbReference type="PANTHER" id="PTHR31113">
    <property type="entry name" value="UPF0496 PROTEIN 3-RELATED"/>
    <property type="match status" value="1"/>
</dbReference>
<dbReference type="Pfam" id="PF05055">
    <property type="entry name" value="DUF677"/>
    <property type="match status" value="1"/>
</dbReference>
<proteinExistence type="evidence at transcript level"/>
<keyword id="KW-0472">Membrane</keyword>
<keyword id="KW-1185">Reference proteome</keyword>
<keyword id="KW-0812">Transmembrane</keyword>
<keyword id="KW-1133">Transmembrane helix</keyword>
<gene>
    <name type="ordered locus">At3g19250</name>
    <name type="ORF">MVI11.17</name>
</gene>
<feature type="chain" id="PRO_0000306897" description="UPF0496 protein At3g19250">
    <location>
        <begin position="1"/>
        <end position="360"/>
    </location>
</feature>
<feature type="transmembrane region" description="Helical" evidence="1">
    <location>
        <begin position="205"/>
        <end position="225"/>
    </location>
</feature>
<feature type="transmembrane region" description="Helical" evidence="1">
    <location>
        <begin position="229"/>
        <end position="249"/>
    </location>
</feature>
<feature type="region of interest" description="Disordered" evidence="2">
    <location>
        <begin position="1"/>
        <end position="29"/>
    </location>
</feature>
<evidence type="ECO:0000255" key="1"/>
<evidence type="ECO:0000256" key="2">
    <source>
        <dbReference type="SAM" id="MobiDB-lite"/>
    </source>
</evidence>
<evidence type="ECO:0000305" key="3"/>
<reference key="1">
    <citation type="journal article" date="2000" name="DNA Res.">
        <title>Structural analysis of Arabidopsis thaliana chromosome 3. II. Sequence features of the 4,251,695 bp regions covered by 90 P1, TAC and BAC clones.</title>
        <authorList>
            <person name="Kaneko T."/>
            <person name="Katoh T."/>
            <person name="Sato S."/>
            <person name="Nakamura Y."/>
            <person name="Asamizu E."/>
            <person name="Tabata S."/>
        </authorList>
    </citation>
    <scope>NUCLEOTIDE SEQUENCE [LARGE SCALE GENOMIC DNA]</scope>
    <source>
        <strain>cv. Columbia</strain>
    </source>
</reference>
<reference key="2">
    <citation type="journal article" date="2017" name="Plant J.">
        <title>Araport11: a complete reannotation of the Arabidopsis thaliana reference genome.</title>
        <authorList>
            <person name="Cheng C.Y."/>
            <person name="Krishnakumar V."/>
            <person name="Chan A.P."/>
            <person name="Thibaud-Nissen F."/>
            <person name="Schobel S."/>
            <person name="Town C.D."/>
        </authorList>
    </citation>
    <scope>GENOME REANNOTATION</scope>
    <source>
        <strain>cv. Columbia</strain>
    </source>
</reference>
<reference key="3">
    <citation type="journal article" date="2006" name="Plant Biotechnol. J.">
        <title>Simultaneous high-throughput recombinational cloning of open reading frames in closed and open configurations.</title>
        <authorList>
            <person name="Underwood B.A."/>
            <person name="Vanderhaeghen R."/>
            <person name="Whitford R."/>
            <person name="Town C.D."/>
            <person name="Hilson P."/>
        </authorList>
    </citation>
    <scope>NUCLEOTIDE SEQUENCE [LARGE SCALE MRNA]</scope>
    <source>
        <strain>cv. Columbia</strain>
    </source>
</reference>
<organism>
    <name type="scientific">Arabidopsis thaliana</name>
    <name type="common">Mouse-ear cress</name>
    <dbReference type="NCBI Taxonomy" id="3702"/>
    <lineage>
        <taxon>Eukaryota</taxon>
        <taxon>Viridiplantae</taxon>
        <taxon>Streptophyta</taxon>
        <taxon>Embryophyta</taxon>
        <taxon>Tracheophyta</taxon>
        <taxon>Spermatophyta</taxon>
        <taxon>Magnoliopsida</taxon>
        <taxon>eudicotyledons</taxon>
        <taxon>Gunneridae</taxon>
        <taxon>Pentapetalae</taxon>
        <taxon>rosids</taxon>
        <taxon>malvids</taxon>
        <taxon>Brassicales</taxon>
        <taxon>Brassicaceae</taxon>
        <taxon>Camelineae</taxon>
        <taxon>Arabidopsis</taxon>
    </lineage>
</organism>
<protein>
    <recommendedName>
        <fullName>UPF0496 protein At3g19250</fullName>
    </recommendedName>
</protein>